<comment type="function">
    <text evidence="1">Plays a role in virus cell tropism, and may be required for efficient virus replication in macrophages.</text>
</comment>
<comment type="subcellular location">
    <subcellularLocation>
        <location evidence="2">Host endoplasmic reticulum lumen</location>
    </subcellularLocation>
</comment>
<comment type="induction">
    <text evidence="5">Expressed in the early phase of the viral replicative cycle.</text>
</comment>
<comment type="PTM">
    <text evidence="2">N-glycosylated.</text>
</comment>
<comment type="similarity">
    <text evidence="5">Belongs to the asfivirus MGF 110 family.</text>
</comment>
<protein>
    <recommendedName>
        <fullName>Protein MGF 110-6L</fullName>
    </recommendedName>
</protein>
<evidence type="ECO:0000250" key="1"/>
<evidence type="ECO:0000250" key="2">
    <source>
        <dbReference type="UniProtKB" id="P68744"/>
    </source>
</evidence>
<evidence type="ECO:0000255" key="3"/>
<evidence type="ECO:0000255" key="4">
    <source>
        <dbReference type="PROSITE-ProRule" id="PRU10138"/>
    </source>
</evidence>
<evidence type="ECO:0000305" key="5"/>
<organismHost>
    <name type="scientific">Ornithodoros</name>
    <name type="common">relapsing fever ticks</name>
    <dbReference type="NCBI Taxonomy" id="6937"/>
</organismHost>
<organismHost>
    <name type="scientific">Phacochoerus aethiopicus</name>
    <name type="common">Warthog</name>
    <dbReference type="NCBI Taxonomy" id="85517"/>
</organismHost>
<organismHost>
    <name type="scientific">Phacochoerus africanus</name>
    <name type="common">Warthog</name>
    <dbReference type="NCBI Taxonomy" id="41426"/>
</organismHost>
<organismHost>
    <name type="scientific">Potamochoerus larvatus</name>
    <name type="common">Bushpig</name>
    <dbReference type="NCBI Taxonomy" id="273792"/>
</organismHost>
<organismHost>
    <name type="scientific">Sus scrofa</name>
    <name type="common">Pig</name>
    <dbReference type="NCBI Taxonomy" id="9823"/>
</organismHost>
<name>1106L_ASFM2</name>
<organism>
    <name type="scientific">African swine fever virus (isolate Tick/Malawi/Lil 20-1/1983)</name>
    <name type="common">ASFV</name>
    <dbReference type="NCBI Taxonomy" id="10500"/>
    <lineage>
        <taxon>Viruses</taxon>
        <taxon>Varidnaviria</taxon>
        <taxon>Bamfordvirae</taxon>
        <taxon>Nucleocytoviricota</taxon>
        <taxon>Pokkesviricetes</taxon>
        <taxon>Asfuvirales</taxon>
        <taxon>Asfarviridae</taxon>
        <taxon>Asfivirus</taxon>
        <taxon>African swine fever virus</taxon>
    </lineage>
</organism>
<dbReference type="EMBL" id="AY261361">
    <property type="status" value="NOT_ANNOTATED_CDS"/>
    <property type="molecule type" value="Genomic_DNA"/>
</dbReference>
<dbReference type="Proteomes" id="UP000000860">
    <property type="component" value="Segment"/>
</dbReference>
<dbReference type="GO" id="GO:0044166">
    <property type="term" value="C:host cell endoplasmic reticulum lumen"/>
    <property type="evidence" value="ECO:0007669"/>
    <property type="project" value="UniProtKB-SubCell"/>
</dbReference>
<dbReference type="InterPro" id="IPR004848">
    <property type="entry name" value="ASFV_fam_110"/>
</dbReference>
<dbReference type="Pfam" id="PF01639">
    <property type="entry name" value="v110"/>
    <property type="match status" value="1"/>
</dbReference>
<dbReference type="PROSITE" id="PS00014">
    <property type="entry name" value="ER_TARGET"/>
    <property type="match status" value="1"/>
</dbReference>
<reference key="1">
    <citation type="submission" date="2003-03" db="EMBL/GenBank/DDBJ databases">
        <title>African swine fever virus genomes.</title>
        <authorList>
            <person name="Kutish G.F."/>
            <person name="Rock D.L."/>
        </authorList>
    </citation>
    <scope>NUCLEOTIDE SEQUENCE [LARGE SCALE GENOMIC DNA]</scope>
</reference>
<accession>P0C9H9</accession>
<proteinExistence type="inferred from homology"/>
<sequence>MLVTFLGILGLLASQVSSQLVGQLRPTEDPPEEELEYWCAYMESCQFCWDCQDGNCINKIDGSVIYKNEYVRPCSVSRSMDKCMYDLNKGIYHSMSCSDPKAWNPYKYFRKEWKKDEL</sequence>
<keyword id="KW-0244">Early protein</keyword>
<keyword id="KW-1038">Host endoplasmic reticulum</keyword>
<keyword id="KW-0732">Signal</keyword>
<gene>
    <name type="ordered locus">Mal-011</name>
</gene>
<feature type="signal peptide" evidence="3">
    <location>
        <begin position="1"/>
        <end position="18"/>
    </location>
</feature>
<feature type="chain" id="PRO_0000373201" description="Protein MGF 110-6L">
    <location>
        <begin position="19"/>
        <end position="118"/>
    </location>
</feature>
<feature type="short sequence motif" description="Prevents secretion from ER" evidence="4">
    <location>
        <begin position="115"/>
        <end position="118"/>
    </location>
</feature>